<keyword id="KW-0002">3D-structure</keyword>
<keyword id="KW-0963">Cytoplasm</keyword>
<keyword id="KW-0378">Hydrolase</keyword>
<keyword id="KW-0520">NAD</keyword>
<keyword id="KW-0554">One-carbon metabolism</keyword>
<keyword id="KW-1185">Reference proteome</keyword>
<accession>O51933</accession>
<protein>
    <recommendedName>
        <fullName evidence="1">Adenosylhomocysteinase</fullName>
        <ecNumber evidence="1">3.13.2.1</ecNumber>
    </recommendedName>
    <alternativeName>
        <fullName evidence="1">S-adenosyl-L-homocysteine hydrolase</fullName>
        <shortName evidence="1">AdoHcyase</shortName>
    </alternativeName>
</protein>
<comment type="function">
    <text evidence="1">May play a key role in the regulation of the intracellular concentration of adenosylhomocysteine.</text>
</comment>
<comment type="catalytic activity">
    <reaction evidence="1">
        <text>S-adenosyl-L-homocysteine + H2O = L-homocysteine + adenosine</text>
        <dbReference type="Rhea" id="RHEA:21708"/>
        <dbReference type="ChEBI" id="CHEBI:15377"/>
        <dbReference type="ChEBI" id="CHEBI:16335"/>
        <dbReference type="ChEBI" id="CHEBI:57856"/>
        <dbReference type="ChEBI" id="CHEBI:58199"/>
        <dbReference type="EC" id="3.13.2.1"/>
    </reaction>
</comment>
<comment type="cofactor">
    <cofactor evidence="1">
        <name>NAD(+)</name>
        <dbReference type="ChEBI" id="CHEBI:57540"/>
    </cofactor>
    <text evidence="1">Binds 1 NAD(+) per subunit.</text>
</comment>
<comment type="pathway">
    <text evidence="1">Amino-acid biosynthesis; L-homocysteine biosynthesis; L-homocysteine from S-adenosyl-L-homocysteine: step 1/1.</text>
</comment>
<comment type="subcellular location">
    <subcellularLocation>
        <location evidence="1">Cytoplasm</location>
    </subcellularLocation>
</comment>
<comment type="similarity">
    <text evidence="1">Belongs to the adenosylhomocysteinase family.</text>
</comment>
<feature type="chain" id="PRO_0000116995" description="Adenosylhomocysteinase">
    <location>
        <begin position="1"/>
        <end position="404"/>
    </location>
</feature>
<feature type="binding site" evidence="1">
    <location>
        <position position="114"/>
    </location>
    <ligand>
        <name>substrate</name>
    </ligand>
</feature>
<feature type="binding site" evidence="1">
    <location>
        <position position="139"/>
    </location>
    <ligand>
        <name>substrate</name>
    </ligand>
</feature>
<feature type="binding site" evidence="1">
    <location>
        <begin position="140"/>
        <end position="142"/>
    </location>
    <ligand>
        <name>NAD(+)</name>
        <dbReference type="ChEBI" id="CHEBI:57540"/>
    </ligand>
</feature>
<feature type="binding site" evidence="1">
    <location>
        <position position="169"/>
    </location>
    <ligand>
        <name>substrate</name>
    </ligand>
</feature>
<feature type="binding site" evidence="1">
    <location>
        <position position="173"/>
    </location>
    <ligand>
        <name>substrate</name>
    </ligand>
</feature>
<feature type="binding site" evidence="1">
    <location>
        <position position="174"/>
    </location>
    <ligand>
        <name>NAD(+)</name>
        <dbReference type="ChEBI" id="CHEBI:57540"/>
    </ligand>
</feature>
<feature type="binding site" evidence="1">
    <location>
        <begin position="203"/>
        <end position="208"/>
    </location>
    <ligand>
        <name>NAD(+)</name>
        <dbReference type="ChEBI" id="CHEBI:57540"/>
    </ligand>
</feature>
<feature type="binding site" evidence="1">
    <location>
        <position position="226"/>
    </location>
    <ligand>
        <name>NAD(+)</name>
        <dbReference type="ChEBI" id="CHEBI:57540"/>
    </ligand>
</feature>
<feature type="binding site" evidence="1">
    <location>
        <position position="261"/>
    </location>
    <ligand>
        <name>NAD(+)</name>
        <dbReference type="ChEBI" id="CHEBI:57540"/>
    </ligand>
</feature>
<feature type="binding site" evidence="1">
    <location>
        <begin position="282"/>
        <end position="284"/>
    </location>
    <ligand>
        <name>NAD(+)</name>
        <dbReference type="ChEBI" id="CHEBI:57540"/>
    </ligand>
</feature>
<feature type="binding site" evidence="1">
    <location>
        <position position="329"/>
    </location>
    <ligand>
        <name>NAD(+)</name>
        <dbReference type="ChEBI" id="CHEBI:57540"/>
    </ligand>
</feature>
<feature type="sequence conflict" description="In Ref. 1; AAC01562." evidence="2" ref="1">
    <original>A</original>
    <variation>R</variation>
    <location>
        <position position="44"/>
    </location>
</feature>
<feature type="sequence conflict" description="In Ref. 1; AAC01562." evidence="2" ref="1">
    <original>I</original>
    <variation>V</variation>
    <location>
        <position position="51"/>
    </location>
</feature>
<feature type="helix" evidence="5">
    <location>
        <begin position="3"/>
        <end position="12"/>
    </location>
</feature>
<feature type="helix" evidence="5">
    <location>
        <begin position="16"/>
        <end position="25"/>
    </location>
</feature>
<feature type="turn" evidence="5">
    <location>
        <begin position="26"/>
        <end position="28"/>
    </location>
</feature>
<feature type="turn" evidence="5">
    <location>
        <begin position="30"/>
        <end position="33"/>
    </location>
</feature>
<feature type="strand" evidence="5">
    <location>
        <begin position="35"/>
        <end position="40"/>
    </location>
</feature>
<feature type="helix" evidence="5">
    <location>
        <begin position="44"/>
        <end position="55"/>
    </location>
</feature>
<feature type="strand" evidence="5">
    <location>
        <begin position="59"/>
        <end position="64"/>
    </location>
</feature>
<feature type="strand" evidence="5">
    <location>
        <begin position="67"/>
        <end position="69"/>
    </location>
</feature>
<feature type="helix" evidence="5">
    <location>
        <begin position="72"/>
        <end position="80"/>
    </location>
</feature>
<feature type="strand" evidence="5">
    <location>
        <begin position="84"/>
        <end position="86"/>
    </location>
</feature>
<feature type="turn" evidence="5">
    <location>
        <begin position="88"/>
        <end position="91"/>
    </location>
</feature>
<feature type="helix" evidence="5">
    <location>
        <begin position="93"/>
        <end position="105"/>
    </location>
</feature>
<feature type="strand" evidence="5">
    <location>
        <begin position="109"/>
        <end position="114"/>
    </location>
</feature>
<feature type="helix" evidence="5">
    <location>
        <begin position="117"/>
        <end position="124"/>
    </location>
</feature>
<feature type="helix" evidence="5">
    <location>
        <begin position="127"/>
        <end position="130"/>
    </location>
</feature>
<feature type="strand" evidence="5">
    <location>
        <begin position="135"/>
        <end position="138"/>
    </location>
</feature>
<feature type="helix" evidence="5">
    <location>
        <begin position="141"/>
        <end position="152"/>
    </location>
</feature>
<feature type="strand" evidence="5">
    <location>
        <begin position="160"/>
        <end position="162"/>
    </location>
</feature>
<feature type="turn" evidence="5">
    <location>
        <begin position="169"/>
        <end position="171"/>
    </location>
</feature>
<feature type="helix" evidence="4">
    <location>
        <begin position="174"/>
        <end position="176"/>
    </location>
</feature>
<feature type="helix" evidence="5">
    <location>
        <begin position="179"/>
        <end position="190"/>
    </location>
</feature>
<feature type="strand" evidence="5">
    <location>
        <begin position="198"/>
        <end position="202"/>
    </location>
</feature>
<feature type="helix" evidence="5">
    <location>
        <begin position="206"/>
        <end position="217"/>
    </location>
</feature>
<feature type="strand" evidence="5">
    <location>
        <begin position="221"/>
        <end position="225"/>
    </location>
</feature>
<feature type="helix" evidence="5">
    <location>
        <begin position="229"/>
        <end position="237"/>
    </location>
</feature>
<feature type="helix" evidence="5">
    <location>
        <begin position="245"/>
        <end position="248"/>
    </location>
</feature>
<feature type="turn" evidence="5">
    <location>
        <begin position="249"/>
        <end position="251"/>
    </location>
</feature>
<feature type="strand" evidence="5">
    <location>
        <begin position="253"/>
        <end position="257"/>
    </location>
</feature>
<feature type="helix" evidence="5">
    <location>
        <begin position="267"/>
        <end position="272"/>
    </location>
</feature>
<feature type="strand" evidence="5">
    <location>
        <begin position="278"/>
        <end position="281"/>
    </location>
</feature>
<feature type="strand" evidence="5">
    <location>
        <begin position="283"/>
        <end position="285"/>
    </location>
</feature>
<feature type="turn" evidence="5">
    <location>
        <begin position="286"/>
        <end position="290"/>
    </location>
</feature>
<feature type="helix" evidence="5">
    <location>
        <begin position="291"/>
        <end position="297"/>
    </location>
</feature>
<feature type="strand" evidence="5">
    <location>
        <begin position="299"/>
        <end position="305"/>
    </location>
</feature>
<feature type="strand" evidence="5">
    <location>
        <begin position="308"/>
        <end position="312"/>
    </location>
</feature>
<feature type="strand" evidence="5">
    <location>
        <begin position="318"/>
        <end position="322"/>
    </location>
</feature>
<feature type="helix" evidence="5">
    <location>
        <begin position="323"/>
        <end position="325"/>
    </location>
</feature>
<feature type="helix" evidence="3">
    <location>
        <begin position="328"/>
        <end position="331"/>
    </location>
</feature>
<feature type="helix" evidence="5">
    <location>
        <begin position="338"/>
        <end position="358"/>
    </location>
</feature>
<feature type="helix" evidence="5">
    <location>
        <begin position="359"/>
        <end position="361"/>
    </location>
</feature>
<feature type="strand" evidence="5">
    <location>
        <begin position="364"/>
        <end position="368"/>
    </location>
</feature>
<feature type="helix" evidence="5">
    <location>
        <begin position="371"/>
        <end position="385"/>
    </location>
</feature>
<feature type="helix" evidence="5">
    <location>
        <begin position="394"/>
        <end position="399"/>
    </location>
</feature>
<dbReference type="EC" id="3.13.2.1" evidence="1"/>
<dbReference type="EMBL" id="AF013268">
    <property type="protein sequence ID" value="AAC01562.1"/>
    <property type="molecule type" value="Genomic_DNA"/>
</dbReference>
<dbReference type="EMBL" id="AE000512">
    <property type="protein sequence ID" value="AAD35265.1"/>
    <property type="molecule type" value="Genomic_DNA"/>
</dbReference>
<dbReference type="PIR" id="B72409">
    <property type="entry name" value="B72409"/>
</dbReference>
<dbReference type="RefSeq" id="NP_227987.1">
    <property type="nucleotide sequence ID" value="NC_000853.1"/>
</dbReference>
<dbReference type="RefSeq" id="WP_004082805.1">
    <property type="nucleotide sequence ID" value="NZ_CP011107.1"/>
</dbReference>
<dbReference type="PDB" id="3X2E">
    <property type="method" value="X-ray"/>
    <property type="resolution" value="2.85 A"/>
    <property type="chains" value="A/B/C/D=2-404"/>
</dbReference>
<dbReference type="PDB" id="3X2F">
    <property type="method" value="X-ray"/>
    <property type="resolution" value="2.04 A"/>
    <property type="chains" value="A/B=2-404"/>
</dbReference>
<dbReference type="PDB" id="5TOV">
    <property type="method" value="X-ray"/>
    <property type="resolution" value="1.90 A"/>
    <property type="chains" value="A/B=1-404"/>
</dbReference>
<dbReference type="PDB" id="5TOW">
    <property type="method" value="X-ray"/>
    <property type="resolution" value="1.75 A"/>
    <property type="chains" value="A/B=1-404"/>
</dbReference>
<dbReference type="PDBsum" id="3X2E"/>
<dbReference type="PDBsum" id="3X2F"/>
<dbReference type="PDBsum" id="5TOV"/>
<dbReference type="PDBsum" id="5TOW"/>
<dbReference type="SMR" id="O51933"/>
<dbReference type="STRING" id="243274.TM_0172"/>
<dbReference type="ChEMBL" id="CHEMBL1075032"/>
<dbReference type="PaxDb" id="243274-THEMA_03940"/>
<dbReference type="EnsemblBacteria" id="AAD35265">
    <property type="protein sequence ID" value="AAD35265"/>
    <property type="gene ID" value="TM_0172"/>
</dbReference>
<dbReference type="KEGG" id="tma:TM0172"/>
<dbReference type="KEGG" id="tmi:THEMA_03940"/>
<dbReference type="KEGG" id="tmm:Tmari_0170"/>
<dbReference type="KEGG" id="tmw:THMA_0168"/>
<dbReference type="eggNOG" id="COG0499">
    <property type="taxonomic scope" value="Bacteria"/>
</dbReference>
<dbReference type="InParanoid" id="O51933"/>
<dbReference type="OrthoDB" id="9802717at2"/>
<dbReference type="BRENDA" id="3.3.1.1">
    <property type="organism ID" value="6331"/>
</dbReference>
<dbReference type="SABIO-RK" id="O51933"/>
<dbReference type="UniPathway" id="UPA00314">
    <property type="reaction ID" value="UER00076"/>
</dbReference>
<dbReference type="EvolutionaryTrace" id="O51933"/>
<dbReference type="PRO" id="PR:O51933"/>
<dbReference type="Proteomes" id="UP000008183">
    <property type="component" value="Chromosome"/>
</dbReference>
<dbReference type="GO" id="GO:0005829">
    <property type="term" value="C:cytosol"/>
    <property type="evidence" value="ECO:0000318"/>
    <property type="project" value="GO_Central"/>
</dbReference>
<dbReference type="GO" id="GO:0004013">
    <property type="term" value="F:adenosylhomocysteinase activity"/>
    <property type="evidence" value="ECO:0000318"/>
    <property type="project" value="GO_Central"/>
</dbReference>
<dbReference type="GO" id="GO:0071269">
    <property type="term" value="P:L-homocysteine biosynthetic process"/>
    <property type="evidence" value="ECO:0007669"/>
    <property type="project" value="UniProtKB-UniRule"/>
</dbReference>
<dbReference type="GO" id="GO:0006730">
    <property type="term" value="P:one-carbon metabolic process"/>
    <property type="evidence" value="ECO:0007669"/>
    <property type="project" value="UniProtKB-KW"/>
</dbReference>
<dbReference type="GO" id="GO:0033353">
    <property type="term" value="P:S-adenosylmethionine cycle"/>
    <property type="evidence" value="ECO:0000318"/>
    <property type="project" value="GO_Central"/>
</dbReference>
<dbReference type="CDD" id="cd00401">
    <property type="entry name" value="SAHH"/>
    <property type="match status" value="1"/>
</dbReference>
<dbReference type="FunFam" id="3.40.50.720:FF:000004">
    <property type="entry name" value="Adenosylhomocysteinase"/>
    <property type="match status" value="1"/>
</dbReference>
<dbReference type="Gene3D" id="3.40.50.1480">
    <property type="entry name" value="Adenosylhomocysteinase-like"/>
    <property type="match status" value="1"/>
</dbReference>
<dbReference type="Gene3D" id="3.40.50.720">
    <property type="entry name" value="NAD(P)-binding Rossmann-like Domain"/>
    <property type="match status" value="1"/>
</dbReference>
<dbReference type="HAMAP" id="MF_00563">
    <property type="entry name" value="AdoHcyase"/>
    <property type="match status" value="1"/>
</dbReference>
<dbReference type="InterPro" id="IPR042172">
    <property type="entry name" value="Adenosylhomocyst_ase-like_sf"/>
</dbReference>
<dbReference type="InterPro" id="IPR000043">
    <property type="entry name" value="Adenosylhomocysteinase-like"/>
</dbReference>
<dbReference type="InterPro" id="IPR015878">
    <property type="entry name" value="Ado_hCys_hydrolase_NAD-bd"/>
</dbReference>
<dbReference type="InterPro" id="IPR036291">
    <property type="entry name" value="NAD(P)-bd_dom_sf"/>
</dbReference>
<dbReference type="InterPro" id="IPR020082">
    <property type="entry name" value="S-Ado-L-homoCys_hydrolase_CS"/>
</dbReference>
<dbReference type="NCBIfam" id="TIGR00936">
    <property type="entry name" value="ahcY"/>
    <property type="match status" value="1"/>
</dbReference>
<dbReference type="NCBIfam" id="NF004005">
    <property type="entry name" value="PRK05476.2-3"/>
    <property type="match status" value="1"/>
</dbReference>
<dbReference type="PANTHER" id="PTHR23420">
    <property type="entry name" value="ADENOSYLHOMOCYSTEINASE"/>
    <property type="match status" value="1"/>
</dbReference>
<dbReference type="PANTHER" id="PTHR23420:SF0">
    <property type="entry name" value="ADENOSYLHOMOCYSTEINASE"/>
    <property type="match status" value="1"/>
</dbReference>
<dbReference type="Pfam" id="PF05221">
    <property type="entry name" value="AdoHcyase"/>
    <property type="match status" value="2"/>
</dbReference>
<dbReference type="Pfam" id="PF00670">
    <property type="entry name" value="AdoHcyase_NAD"/>
    <property type="match status" value="1"/>
</dbReference>
<dbReference type="PIRSF" id="PIRSF001109">
    <property type="entry name" value="Ad_hcy_hydrolase"/>
    <property type="match status" value="1"/>
</dbReference>
<dbReference type="SMART" id="SM00996">
    <property type="entry name" value="AdoHcyase"/>
    <property type="match status" value="1"/>
</dbReference>
<dbReference type="SMART" id="SM00997">
    <property type="entry name" value="AdoHcyase_NAD"/>
    <property type="match status" value="1"/>
</dbReference>
<dbReference type="SUPFAM" id="SSF52283">
    <property type="entry name" value="Formate/glycerate dehydrogenase catalytic domain-like"/>
    <property type="match status" value="1"/>
</dbReference>
<dbReference type="SUPFAM" id="SSF51735">
    <property type="entry name" value="NAD(P)-binding Rossmann-fold domains"/>
    <property type="match status" value="1"/>
</dbReference>
<dbReference type="PROSITE" id="PS00738">
    <property type="entry name" value="ADOHCYASE_1"/>
    <property type="match status" value="1"/>
</dbReference>
<dbReference type="PROSITE" id="PS00739">
    <property type="entry name" value="ADOHCYASE_2"/>
    <property type="match status" value="1"/>
</dbReference>
<gene>
    <name evidence="1" type="primary">ahcY</name>
    <name type="ordered locus">TM_0172</name>
</gene>
<organism>
    <name type="scientific">Thermotoga maritima (strain ATCC 43589 / DSM 3109 / JCM 10099 / NBRC 100826 / MSB8)</name>
    <dbReference type="NCBI Taxonomy" id="243274"/>
    <lineage>
        <taxon>Bacteria</taxon>
        <taxon>Thermotogati</taxon>
        <taxon>Thermotogota</taxon>
        <taxon>Thermotogae</taxon>
        <taxon>Thermotogales</taxon>
        <taxon>Thermotogaceae</taxon>
        <taxon>Thermotoga</taxon>
    </lineage>
</organism>
<evidence type="ECO:0000255" key="1">
    <source>
        <dbReference type="HAMAP-Rule" id="MF_00563"/>
    </source>
</evidence>
<evidence type="ECO:0000305" key="2"/>
<evidence type="ECO:0007829" key="3">
    <source>
        <dbReference type="PDB" id="3X2F"/>
    </source>
</evidence>
<evidence type="ECO:0007829" key="4">
    <source>
        <dbReference type="PDB" id="5TOV"/>
    </source>
</evidence>
<evidence type="ECO:0007829" key="5">
    <source>
        <dbReference type="PDB" id="5TOW"/>
    </source>
</evidence>
<name>SAHH_THEMA</name>
<proteinExistence type="evidence at protein level"/>
<reference key="1">
    <citation type="journal article" date="1998" name="J. Bacteriol.">
        <title>Reverse gyrase from the hyperthermophilic bacterium Thermotoga maritima: properties and gene structure.</title>
        <authorList>
            <person name="Bouthier de la Tour C."/>
            <person name="Portemer C."/>
            <person name="Kaltoum H."/>
            <person name="Duguet M."/>
        </authorList>
    </citation>
    <scope>NUCLEOTIDE SEQUENCE [GENOMIC DNA]</scope>
    <source>
        <strain>ATCC 43589 / DSM 3109 / JCM 10099 / NBRC 100826 / MSB8</strain>
    </source>
</reference>
<reference key="2">
    <citation type="journal article" date="1999" name="Nature">
        <title>Evidence for lateral gene transfer between Archaea and Bacteria from genome sequence of Thermotoga maritima.</title>
        <authorList>
            <person name="Nelson K.E."/>
            <person name="Clayton R.A."/>
            <person name="Gill S.R."/>
            <person name="Gwinn M.L."/>
            <person name="Dodson R.J."/>
            <person name="Haft D.H."/>
            <person name="Hickey E.K."/>
            <person name="Peterson J.D."/>
            <person name="Nelson W.C."/>
            <person name="Ketchum K.A."/>
            <person name="McDonald L.A."/>
            <person name="Utterback T.R."/>
            <person name="Malek J.A."/>
            <person name="Linher K.D."/>
            <person name="Garrett M.M."/>
            <person name="Stewart A.M."/>
            <person name="Cotton M.D."/>
            <person name="Pratt M.S."/>
            <person name="Phillips C.A."/>
            <person name="Richardson D.L."/>
            <person name="Heidelberg J.F."/>
            <person name="Sutton G.G."/>
            <person name="Fleischmann R.D."/>
            <person name="Eisen J.A."/>
            <person name="White O."/>
            <person name="Salzberg S.L."/>
            <person name="Smith H.O."/>
            <person name="Venter J.C."/>
            <person name="Fraser C.M."/>
        </authorList>
    </citation>
    <scope>NUCLEOTIDE SEQUENCE [LARGE SCALE GENOMIC DNA]</scope>
    <source>
        <strain>ATCC 43589 / DSM 3109 / JCM 10099 / NBRC 100826 / MSB8</strain>
    </source>
</reference>
<sequence>MNTGEMKINWVSRYMPLLNKIAEEYSREKPLSGFTVGMSIHLEAKTAYLAITLSKLGAKVVITGSNPLSTQDDVAEALRSKGITVYARRTHDESIYRENLMKVLDERPDFIIDDGGDLTVISHTEREEVLENLKGVSEETTTGVRRLKALEETGKLRVPVIAVNDSKMKYLFDNRYGTGQSTWDAIMRNTNLLVAGKNVVVAGYGWCGRGIALRAAGLGARVIVTEVDPVKAVEAIMDGFTVMPMKEAVKIADFVITASGNTDVLSKEDILSLKDGAVLANAGHFNVEIPVRVLEEIAVEKFEARPNVTGYTLENGKTVFLLAEGRLVNLAAGDGHPVEIMDLSFALQIFAVLYLLENHRKMSPKVYMLPDEIDERVARMKLDSLGVKIDELTEKQRRYLRSWQ</sequence>